<gene>
    <name type="ordered locus">Os04g0445000</name>
    <name type="ordered locus">LOC_Os04g36740</name>
    <name type="ORF">OSJNBa0027P08.8</name>
</gene>
<accession>Q7XUW4</accession>
<accession>B7EY26</accession>
<accession>Q0JCX5</accession>
<keyword id="KW-0025">Alternative splicing</keyword>
<keyword id="KW-0040">ANK repeat</keyword>
<keyword id="KW-0407">Ion channel</keyword>
<keyword id="KW-0406">Ion transport</keyword>
<keyword id="KW-0472">Membrane</keyword>
<keyword id="KW-0630">Potassium</keyword>
<keyword id="KW-0631">Potassium channel</keyword>
<keyword id="KW-0633">Potassium transport</keyword>
<keyword id="KW-1185">Reference proteome</keyword>
<keyword id="KW-0677">Repeat</keyword>
<keyword id="KW-0812">Transmembrane</keyword>
<keyword id="KW-1133">Transmembrane helix</keyword>
<keyword id="KW-0813">Transport</keyword>
<keyword id="KW-0851">Voltage-gated channel</keyword>
<evidence type="ECO:0000250" key="1"/>
<evidence type="ECO:0000255" key="2"/>
<evidence type="ECO:0000303" key="3">
    <source>
    </source>
</evidence>
<evidence type="ECO:0000305" key="4"/>
<protein>
    <recommendedName>
        <fullName>Potassium channel KOR2</fullName>
    </recommendedName>
    <alternativeName>
        <fullName>K(+) outward-rectifying channel 2</fullName>
    </alternativeName>
</protein>
<comment type="function">
    <text evidence="1">Probable outward-rectifying potassium channel.</text>
</comment>
<comment type="subcellular location">
    <subcellularLocation>
        <location evidence="4">Membrane</location>
        <topology evidence="4">Multi-pass membrane protein</topology>
    </subcellularLocation>
</comment>
<comment type="alternative products">
    <event type="alternative splicing"/>
    <isoform>
        <id>Q7XUW4-1</id>
        <name>1</name>
        <sequence type="displayed"/>
    </isoform>
    <isoform>
        <id>Q7XUW4-2</id>
        <name>2</name>
        <sequence type="described" ref="VSP_041554"/>
    </isoform>
</comment>
<comment type="domain">
    <text evidence="1">The segment S4 is probably the voltage-sensor and is characterized by a series of positively charged amino acids. The pore-forming region H5 is enclosed by the transmembrane segments S5 and S6 in the Shaker-type (1P/6TM) and contains the GYGD signature motif which seems to be involved in potassium selectivity (By similarity).</text>
</comment>
<comment type="similarity">
    <text evidence="4">Belongs to the potassium channel family. Plant (TC 1.A.1.4) subfamily.</text>
</comment>
<comment type="sequence caution" evidence="4">
    <conflict type="erroneous gene model prediction">
        <sequence resource="EMBL-CDS" id="BAF14812"/>
    </conflict>
</comment>
<proteinExistence type="evidence at transcript level"/>
<feature type="chain" id="PRO_0000410884" description="Potassium channel KOR2">
    <location>
        <begin position="1"/>
        <end position="719"/>
    </location>
</feature>
<feature type="topological domain" description="Cytoplasmic" evidence="2">
    <location>
        <begin position="1"/>
        <end position="63"/>
    </location>
</feature>
<feature type="transmembrane region" description="Helical; Name=Segment S1" evidence="2">
    <location>
        <begin position="64"/>
        <end position="84"/>
    </location>
</feature>
<feature type="topological domain" description="Extracellular" evidence="2">
    <location>
        <begin position="85"/>
        <end position="93"/>
    </location>
</feature>
<feature type="transmembrane region" description="Helical; Name=Segment S2" evidence="2">
    <location>
        <begin position="94"/>
        <end position="114"/>
    </location>
</feature>
<feature type="topological domain" description="Cytoplasmic" evidence="2">
    <location>
        <begin position="115"/>
        <end position="137"/>
    </location>
</feature>
<feature type="transmembrane region" description="Helical; Name=Segment S3" evidence="2">
    <location>
        <begin position="138"/>
        <end position="158"/>
    </location>
</feature>
<feature type="topological domain" description="Extracellular" evidence="2">
    <location>
        <begin position="159"/>
        <end position="164"/>
    </location>
</feature>
<feature type="transmembrane region" description="Helical; Voltage-sensor; Name=Segment S4" evidence="2">
    <location>
        <begin position="165"/>
        <end position="185"/>
    </location>
</feature>
<feature type="topological domain" description="Cytoplasmic" evidence="2">
    <location>
        <begin position="186"/>
        <end position="199"/>
    </location>
</feature>
<feature type="transmembrane region" description="Helical; Name=Segment S5" evidence="2">
    <location>
        <begin position="200"/>
        <end position="220"/>
    </location>
</feature>
<feature type="topological domain" description="Extracellular" evidence="2">
    <location>
        <begin position="221"/>
        <end position="255"/>
    </location>
</feature>
<feature type="intramembrane region" description="Pore-forming; Name=Segment H5" evidence="2">
    <location>
        <begin position="256"/>
        <end position="275"/>
    </location>
</feature>
<feature type="topological domain" description="Extracellular" evidence="2">
    <location>
        <begin position="276"/>
        <end position="285"/>
    </location>
</feature>
<feature type="transmembrane region" description="Helical; Name=Segment S6" evidence="2">
    <location>
        <begin position="286"/>
        <end position="306"/>
    </location>
</feature>
<feature type="topological domain" description="Cytoplasmic" evidence="2">
    <location>
        <begin position="307"/>
        <end position="719"/>
    </location>
</feature>
<feature type="repeat" description="ANK 1">
    <location>
        <begin position="523"/>
        <end position="556"/>
    </location>
</feature>
<feature type="repeat" description="ANK 2">
    <location>
        <begin position="560"/>
        <end position="589"/>
    </location>
</feature>
<feature type="repeat" description="ANK 3">
    <location>
        <begin position="593"/>
        <end position="622"/>
    </location>
</feature>
<feature type="repeat" description="ANK 4">
    <location>
        <begin position="624"/>
        <end position="653"/>
    </location>
</feature>
<feature type="repeat" description="ANK 5">
    <location>
        <begin position="657"/>
        <end position="686"/>
    </location>
</feature>
<feature type="binding site">
    <location>
        <begin position="383"/>
        <end position="503"/>
    </location>
    <ligand>
        <name>a nucleoside 3',5'-cyclic phosphate</name>
        <dbReference type="ChEBI" id="CHEBI:58464"/>
    </ligand>
</feature>
<feature type="splice variant" id="VSP_041554" description="In isoform 2." evidence="3">
    <location>
        <begin position="1"/>
        <end position="280"/>
    </location>
</feature>
<reference key="1">
    <citation type="journal article" date="2002" name="Nature">
        <title>Sequence and analysis of rice chromosome 4.</title>
        <authorList>
            <person name="Feng Q."/>
            <person name="Zhang Y."/>
            <person name="Hao P."/>
            <person name="Wang S."/>
            <person name="Fu G."/>
            <person name="Huang Y."/>
            <person name="Li Y."/>
            <person name="Zhu J."/>
            <person name="Liu Y."/>
            <person name="Hu X."/>
            <person name="Jia P."/>
            <person name="Zhang Y."/>
            <person name="Zhao Q."/>
            <person name="Ying K."/>
            <person name="Yu S."/>
            <person name="Tang Y."/>
            <person name="Weng Q."/>
            <person name="Zhang L."/>
            <person name="Lu Y."/>
            <person name="Mu J."/>
            <person name="Lu Y."/>
            <person name="Zhang L.S."/>
            <person name="Yu Z."/>
            <person name="Fan D."/>
            <person name="Liu X."/>
            <person name="Lu T."/>
            <person name="Li C."/>
            <person name="Wu Y."/>
            <person name="Sun T."/>
            <person name="Lei H."/>
            <person name="Li T."/>
            <person name="Hu H."/>
            <person name="Guan J."/>
            <person name="Wu M."/>
            <person name="Zhang R."/>
            <person name="Zhou B."/>
            <person name="Chen Z."/>
            <person name="Chen L."/>
            <person name="Jin Z."/>
            <person name="Wang R."/>
            <person name="Yin H."/>
            <person name="Cai Z."/>
            <person name="Ren S."/>
            <person name="Lv G."/>
            <person name="Gu W."/>
            <person name="Zhu G."/>
            <person name="Tu Y."/>
            <person name="Jia J."/>
            <person name="Zhang Y."/>
            <person name="Chen J."/>
            <person name="Kang H."/>
            <person name="Chen X."/>
            <person name="Shao C."/>
            <person name="Sun Y."/>
            <person name="Hu Q."/>
            <person name="Zhang X."/>
            <person name="Zhang W."/>
            <person name="Wang L."/>
            <person name="Ding C."/>
            <person name="Sheng H."/>
            <person name="Gu J."/>
            <person name="Chen S."/>
            <person name="Ni L."/>
            <person name="Zhu F."/>
            <person name="Chen W."/>
            <person name="Lan L."/>
            <person name="Lai Y."/>
            <person name="Cheng Z."/>
            <person name="Gu M."/>
            <person name="Jiang J."/>
            <person name="Li J."/>
            <person name="Hong G."/>
            <person name="Xue Y."/>
            <person name="Han B."/>
        </authorList>
    </citation>
    <scope>NUCLEOTIDE SEQUENCE [LARGE SCALE GENOMIC DNA]</scope>
    <source>
        <strain>cv. Nipponbare</strain>
    </source>
</reference>
<reference key="2">
    <citation type="journal article" date="2005" name="Nature">
        <title>The map-based sequence of the rice genome.</title>
        <authorList>
            <consortium name="International rice genome sequencing project (IRGSP)"/>
        </authorList>
    </citation>
    <scope>NUCLEOTIDE SEQUENCE [LARGE SCALE GENOMIC DNA]</scope>
    <source>
        <strain>cv. Nipponbare</strain>
    </source>
</reference>
<reference key="3">
    <citation type="journal article" date="2008" name="Nucleic Acids Res.">
        <title>The rice annotation project database (RAP-DB): 2008 update.</title>
        <authorList>
            <consortium name="The rice annotation project (RAP)"/>
        </authorList>
    </citation>
    <scope>GENOME REANNOTATION</scope>
    <source>
        <strain>cv. Nipponbare</strain>
    </source>
</reference>
<reference key="4">
    <citation type="journal article" date="2013" name="Rice">
        <title>Improvement of the Oryza sativa Nipponbare reference genome using next generation sequence and optical map data.</title>
        <authorList>
            <person name="Kawahara Y."/>
            <person name="de la Bastide M."/>
            <person name="Hamilton J.P."/>
            <person name="Kanamori H."/>
            <person name="McCombie W.R."/>
            <person name="Ouyang S."/>
            <person name="Schwartz D.C."/>
            <person name="Tanaka T."/>
            <person name="Wu J."/>
            <person name="Zhou S."/>
            <person name="Childs K.L."/>
            <person name="Davidson R.M."/>
            <person name="Lin H."/>
            <person name="Quesada-Ocampo L."/>
            <person name="Vaillancourt B."/>
            <person name="Sakai H."/>
            <person name="Lee S.S."/>
            <person name="Kim J."/>
            <person name="Numa H."/>
            <person name="Itoh T."/>
            <person name="Buell C.R."/>
            <person name="Matsumoto T."/>
        </authorList>
    </citation>
    <scope>GENOME REANNOTATION</scope>
    <source>
        <strain>cv. Nipponbare</strain>
    </source>
</reference>
<reference key="5">
    <citation type="journal article" date="2003" name="Science">
        <title>Collection, mapping, and annotation of over 28,000 cDNA clones from japonica rice.</title>
        <authorList>
            <consortium name="The rice full-length cDNA consortium"/>
        </authorList>
    </citation>
    <scope>NUCLEOTIDE SEQUENCE [LARGE SCALE MRNA] (ISOFORM 2)</scope>
    <source>
        <strain>cv. Nipponbare</strain>
    </source>
</reference>
<name>KOR2_ORYSJ</name>
<sequence length="719" mass="81621">MAEEYELNEIDDTLHGSVGSRLSLFARELKSRRSSSWHGGTALRLPKDLYESLVIHPNGRWYRIWANMMFLWSIYSTFFTPFEFSFFRGLPDQLLDLECVQLVFLADVAVHFFLAYRDPHTYRMVHDKRHIALRYIKGSFALDVLGCFPWDAIYKVTGRVEAVRWLVWVRLYRGRKVMAFFKRVEKDIRVSYLLTRIVKLITVELYCTHTAACGFYYLATTLPPAREGGTWIGSLSLGDARYINFREVDLLTRYVTSLYLAIVTMATVGYGDIHAVNTREMAFTVVYISFSIVLSAYLIGNMTALIVKGSRTERFRDRMTDLIRYMNRNRLGSAIRSQVKDHLMLQYESSYTRDRVIVDDIPVAVRSKMSQTLYLDMVSRVGLFRGCSDDFLSQIVLKLHEEFFLPGEVILEQGTVVDQIYIVAHGCLEEVANGEDGSEEIISELRPYGIVGDVAVICNIPQPYTVRVCELCSLLRIDKQSLTSILQIYFKDNSQILSNLLKGKETESKRKQLESDITYLLAKQESELVLGVNNAAYHGDIFRLKSLISAGADPSKSDYDGRTALHIAALRGYENIVRFLIQRGANVNSIDRFGNSPLLQAVKSGHDRITSLLVEHGAILNLEDAGGYLCRVVRGGRIDLLKKLLRFGISPNCRNYDQRTPLHIAAAEGLHLVASTLIESGADIQAKDRWGNTPLDEGRRCSSKPLVRILEQARTVATN</sequence>
<organism>
    <name type="scientific">Oryza sativa subsp. japonica</name>
    <name type="common">Rice</name>
    <dbReference type="NCBI Taxonomy" id="39947"/>
    <lineage>
        <taxon>Eukaryota</taxon>
        <taxon>Viridiplantae</taxon>
        <taxon>Streptophyta</taxon>
        <taxon>Embryophyta</taxon>
        <taxon>Tracheophyta</taxon>
        <taxon>Spermatophyta</taxon>
        <taxon>Magnoliopsida</taxon>
        <taxon>Liliopsida</taxon>
        <taxon>Poales</taxon>
        <taxon>Poaceae</taxon>
        <taxon>BOP clade</taxon>
        <taxon>Oryzoideae</taxon>
        <taxon>Oryzeae</taxon>
        <taxon>Oryzinae</taxon>
        <taxon>Oryza</taxon>
        <taxon>Oryza sativa</taxon>
    </lineage>
</organism>
<dbReference type="EMBL" id="AL731593">
    <property type="protein sequence ID" value="CAD40970.2"/>
    <property type="molecule type" value="Genomic_DNA"/>
</dbReference>
<dbReference type="EMBL" id="AP008210">
    <property type="protein sequence ID" value="BAF14812.1"/>
    <property type="status" value="ALT_SEQ"/>
    <property type="molecule type" value="Genomic_DNA"/>
</dbReference>
<dbReference type="EMBL" id="AP014960">
    <property type="status" value="NOT_ANNOTATED_CDS"/>
    <property type="molecule type" value="Genomic_DNA"/>
</dbReference>
<dbReference type="EMBL" id="AK105506">
    <property type="protein sequence ID" value="BAG97273.1"/>
    <property type="molecule type" value="mRNA"/>
</dbReference>
<dbReference type="RefSeq" id="XP_015636107.1">
    <property type="nucleotide sequence ID" value="XM_015780621.1"/>
</dbReference>
<dbReference type="SMR" id="Q7XUW4"/>
<dbReference type="FunCoup" id="Q7XUW4">
    <property type="interactions" value="1063"/>
</dbReference>
<dbReference type="STRING" id="39947.Q7XUW4"/>
<dbReference type="PaxDb" id="39947-Q7XUW4"/>
<dbReference type="KEGG" id="dosa:Os04g0445000"/>
<dbReference type="eggNOG" id="KOG0498">
    <property type="taxonomic scope" value="Eukaryota"/>
</dbReference>
<dbReference type="HOGENOM" id="CLU_005746_8_3_1"/>
<dbReference type="InParanoid" id="Q7XUW4"/>
<dbReference type="OrthoDB" id="426293at2759"/>
<dbReference type="Proteomes" id="UP000000763">
    <property type="component" value="Chromosome 4"/>
</dbReference>
<dbReference type="Proteomes" id="UP000059680">
    <property type="component" value="Chromosome 4"/>
</dbReference>
<dbReference type="GO" id="GO:0034702">
    <property type="term" value="C:monoatomic ion channel complex"/>
    <property type="evidence" value="ECO:0007669"/>
    <property type="project" value="UniProtKB-KW"/>
</dbReference>
<dbReference type="GO" id="GO:0005249">
    <property type="term" value="F:voltage-gated potassium channel activity"/>
    <property type="evidence" value="ECO:0007669"/>
    <property type="project" value="InterPro"/>
</dbReference>
<dbReference type="CDD" id="cd00038">
    <property type="entry name" value="CAP_ED"/>
    <property type="match status" value="1"/>
</dbReference>
<dbReference type="FunFam" id="2.60.120.10:FF:000074">
    <property type="entry name" value="Potassium channel KAT2"/>
    <property type="match status" value="1"/>
</dbReference>
<dbReference type="Gene3D" id="1.10.287.70">
    <property type="match status" value="1"/>
</dbReference>
<dbReference type="Gene3D" id="1.25.40.20">
    <property type="entry name" value="Ankyrin repeat-containing domain"/>
    <property type="match status" value="2"/>
</dbReference>
<dbReference type="Gene3D" id="2.60.120.10">
    <property type="entry name" value="Jelly Rolls"/>
    <property type="match status" value="1"/>
</dbReference>
<dbReference type="InterPro" id="IPR002110">
    <property type="entry name" value="Ankyrin_rpt"/>
</dbReference>
<dbReference type="InterPro" id="IPR036770">
    <property type="entry name" value="Ankyrin_rpt-contain_sf"/>
</dbReference>
<dbReference type="InterPro" id="IPR000595">
    <property type="entry name" value="cNMP-bd_dom"/>
</dbReference>
<dbReference type="InterPro" id="IPR018490">
    <property type="entry name" value="cNMP-bd_dom_sf"/>
</dbReference>
<dbReference type="InterPro" id="IPR005821">
    <property type="entry name" value="Ion_trans_dom"/>
</dbReference>
<dbReference type="InterPro" id="IPR003938">
    <property type="entry name" value="K_chnl_volt-dep_EAG/ELK/ERG"/>
</dbReference>
<dbReference type="InterPro" id="IPR045319">
    <property type="entry name" value="KAT/AKT"/>
</dbReference>
<dbReference type="InterPro" id="IPR014710">
    <property type="entry name" value="RmlC-like_jellyroll"/>
</dbReference>
<dbReference type="PANTHER" id="PTHR45743">
    <property type="entry name" value="POTASSIUM CHANNEL AKT1"/>
    <property type="match status" value="1"/>
</dbReference>
<dbReference type="PANTHER" id="PTHR45743:SF4">
    <property type="entry name" value="POTASSIUM CHANNEL KOR2"/>
    <property type="match status" value="1"/>
</dbReference>
<dbReference type="Pfam" id="PF12796">
    <property type="entry name" value="Ank_2"/>
    <property type="match status" value="2"/>
</dbReference>
<dbReference type="Pfam" id="PF00027">
    <property type="entry name" value="cNMP_binding"/>
    <property type="match status" value="1"/>
</dbReference>
<dbReference type="Pfam" id="PF00520">
    <property type="entry name" value="Ion_trans"/>
    <property type="match status" value="1"/>
</dbReference>
<dbReference type="PRINTS" id="PR01415">
    <property type="entry name" value="ANKYRIN"/>
</dbReference>
<dbReference type="PRINTS" id="PR01463">
    <property type="entry name" value="EAGCHANLFMLY"/>
</dbReference>
<dbReference type="SMART" id="SM00248">
    <property type="entry name" value="ANK"/>
    <property type="match status" value="4"/>
</dbReference>
<dbReference type="SMART" id="SM00100">
    <property type="entry name" value="cNMP"/>
    <property type="match status" value="1"/>
</dbReference>
<dbReference type="SUPFAM" id="SSF48403">
    <property type="entry name" value="Ankyrin repeat"/>
    <property type="match status" value="1"/>
</dbReference>
<dbReference type="SUPFAM" id="SSF51206">
    <property type="entry name" value="cAMP-binding domain-like"/>
    <property type="match status" value="1"/>
</dbReference>
<dbReference type="SUPFAM" id="SSF81324">
    <property type="entry name" value="Voltage-gated potassium channels"/>
    <property type="match status" value="1"/>
</dbReference>
<dbReference type="PROSITE" id="PS50297">
    <property type="entry name" value="ANK_REP_REGION"/>
    <property type="match status" value="1"/>
</dbReference>
<dbReference type="PROSITE" id="PS50088">
    <property type="entry name" value="ANK_REPEAT"/>
    <property type="match status" value="3"/>
</dbReference>
<dbReference type="PROSITE" id="PS50042">
    <property type="entry name" value="CNMP_BINDING_3"/>
    <property type="match status" value="1"/>
</dbReference>